<dbReference type="EC" id="6.1.1.11" evidence="1"/>
<dbReference type="EMBL" id="CP000246">
    <property type="protein sequence ID" value="ABG82627.1"/>
    <property type="molecule type" value="Genomic_DNA"/>
</dbReference>
<dbReference type="RefSeq" id="WP_011590028.1">
    <property type="nucleotide sequence ID" value="NC_008261.1"/>
</dbReference>
<dbReference type="SMR" id="Q0TV53"/>
<dbReference type="STRING" id="195103.CPF_0014"/>
<dbReference type="PaxDb" id="195103-CPF_0014"/>
<dbReference type="KEGG" id="cpf:CPF_0014"/>
<dbReference type="eggNOG" id="COG0172">
    <property type="taxonomic scope" value="Bacteria"/>
</dbReference>
<dbReference type="HOGENOM" id="CLU_023797_1_1_9"/>
<dbReference type="UniPathway" id="UPA00906">
    <property type="reaction ID" value="UER00895"/>
</dbReference>
<dbReference type="Proteomes" id="UP000001823">
    <property type="component" value="Chromosome"/>
</dbReference>
<dbReference type="GO" id="GO:0005737">
    <property type="term" value="C:cytoplasm"/>
    <property type="evidence" value="ECO:0007669"/>
    <property type="project" value="UniProtKB-SubCell"/>
</dbReference>
<dbReference type="GO" id="GO:0005524">
    <property type="term" value="F:ATP binding"/>
    <property type="evidence" value="ECO:0007669"/>
    <property type="project" value="UniProtKB-UniRule"/>
</dbReference>
<dbReference type="GO" id="GO:0140096">
    <property type="term" value="F:catalytic activity, acting on a protein"/>
    <property type="evidence" value="ECO:0007669"/>
    <property type="project" value="UniProtKB-ARBA"/>
</dbReference>
<dbReference type="GO" id="GO:0004828">
    <property type="term" value="F:serine-tRNA ligase activity"/>
    <property type="evidence" value="ECO:0007669"/>
    <property type="project" value="UniProtKB-UniRule"/>
</dbReference>
<dbReference type="GO" id="GO:0016740">
    <property type="term" value="F:transferase activity"/>
    <property type="evidence" value="ECO:0007669"/>
    <property type="project" value="UniProtKB-ARBA"/>
</dbReference>
<dbReference type="GO" id="GO:0016260">
    <property type="term" value="P:selenocysteine biosynthetic process"/>
    <property type="evidence" value="ECO:0007669"/>
    <property type="project" value="UniProtKB-UniRule"/>
</dbReference>
<dbReference type="GO" id="GO:0006434">
    <property type="term" value="P:seryl-tRNA aminoacylation"/>
    <property type="evidence" value="ECO:0007669"/>
    <property type="project" value="UniProtKB-UniRule"/>
</dbReference>
<dbReference type="CDD" id="cd00770">
    <property type="entry name" value="SerRS_core"/>
    <property type="match status" value="1"/>
</dbReference>
<dbReference type="Gene3D" id="3.30.930.10">
    <property type="entry name" value="Bira Bifunctional Protein, Domain 2"/>
    <property type="match status" value="1"/>
</dbReference>
<dbReference type="Gene3D" id="1.10.287.40">
    <property type="entry name" value="Serine-tRNA synthetase, tRNA binding domain"/>
    <property type="match status" value="1"/>
</dbReference>
<dbReference type="HAMAP" id="MF_00176">
    <property type="entry name" value="Ser_tRNA_synth_type1"/>
    <property type="match status" value="1"/>
</dbReference>
<dbReference type="InterPro" id="IPR002314">
    <property type="entry name" value="aa-tRNA-synt_IIb"/>
</dbReference>
<dbReference type="InterPro" id="IPR006195">
    <property type="entry name" value="aa-tRNA-synth_II"/>
</dbReference>
<dbReference type="InterPro" id="IPR045864">
    <property type="entry name" value="aa-tRNA-synth_II/BPL/LPL"/>
</dbReference>
<dbReference type="InterPro" id="IPR002317">
    <property type="entry name" value="Ser-tRNA-ligase_type_1"/>
</dbReference>
<dbReference type="InterPro" id="IPR015866">
    <property type="entry name" value="Ser-tRNA-synth_1_N"/>
</dbReference>
<dbReference type="InterPro" id="IPR042103">
    <property type="entry name" value="SerRS_1_N_sf"/>
</dbReference>
<dbReference type="InterPro" id="IPR033729">
    <property type="entry name" value="SerRS_core"/>
</dbReference>
<dbReference type="InterPro" id="IPR010978">
    <property type="entry name" value="tRNA-bd_arm"/>
</dbReference>
<dbReference type="NCBIfam" id="TIGR00414">
    <property type="entry name" value="serS"/>
    <property type="match status" value="1"/>
</dbReference>
<dbReference type="PANTHER" id="PTHR43697:SF1">
    <property type="entry name" value="SERINE--TRNA LIGASE"/>
    <property type="match status" value="1"/>
</dbReference>
<dbReference type="PANTHER" id="PTHR43697">
    <property type="entry name" value="SERYL-TRNA SYNTHETASE"/>
    <property type="match status" value="1"/>
</dbReference>
<dbReference type="Pfam" id="PF02403">
    <property type="entry name" value="Seryl_tRNA_N"/>
    <property type="match status" value="1"/>
</dbReference>
<dbReference type="Pfam" id="PF00587">
    <property type="entry name" value="tRNA-synt_2b"/>
    <property type="match status" value="1"/>
</dbReference>
<dbReference type="PIRSF" id="PIRSF001529">
    <property type="entry name" value="Ser-tRNA-synth_IIa"/>
    <property type="match status" value="1"/>
</dbReference>
<dbReference type="PRINTS" id="PR00981">
    <property type="entry name" value="TRNASYNTHSER"/>
</dbReference>
<dbReference type="SUPFAM" id="SSF55681">
    <property type="entry name" value="Class II aaRS and biotin synthetases"/>
    <property type="match status" value="1"/>
</dbReference>
<dbReference type="SUPFAM" id="SSF46589">
    <property type="entry name" value="tRNA-binding arm"/>
    <property type="match status" value="1"/>
</dbReference>
<dbReference type="PROSITE" id="PS50862">
    <property type="entry name" value="AA_TRNA_LIGASE_II"/>
    <property type="match status" value="1"/>
</dbReference>
<reference key="1">
    <citation type="journal article" date="2006" name="Genome Res.">
        <title>Skewed genomic variability in strains of the toxigenic bacterial pathogen, Clostridium perfringens.</title>
        <authorList>
            <person name="Myers G.S.A."/>
            <person name="Rasko D.A."/>
            <person name="Cheung J.K."/>
            <person name="Ravel J."/>
            <person name="Seshadri R."/>
            <person name="DeBoy R.T."/>
            <person name="Ren Q."/>
            <person name="Varga J."/>
            <person name="Awad M.M."/>
            <person name="Brinkac L.M."/>
            <person name="Daugherty S.C."/>
            <person name="Haft D.H."/>
            <person name="Dodson R.J."/>
            <person name="Madupu R."/>
            <person name="Nelson W.C."/>
            <person name="Rosovitz M.J."/>
            <person name="Sullivan S.A."/>
            <person name="Khouri H."/>
            <person name="Dimitrov G.I."/>
            <person name="Watkins K.L."/>
            <person name="Mulligan S."/>
            <person name="Benton J."/>
            <person name="Radune D."/>
            <person name="Fisher D.J."/>
            <person name="Atkins H.S."/>
            <person name="Hiscox T."/>
            <person name="Jost B.H."/>
            <person name="Billington S.J."/>
            <person name="Songer J.G."/>
            <person name="McClane B.A."/>
            <person name="Titball R.W."/>
            <person name="Rood J.I."/>
            <person name="Melville S.B."/>
            <person name="Paulsen I.T."/>
        </authorList>
    </citation>
    <scope>NUCLEOTIDE SEQUENCE [LARGE SCALE GENOMIC DNA]</scope>
    <source>
        <strain>ATCC 13124 / DSM 756 / JCM 1290 / NCIMB 6125 / NCTC 8237 / S 107 / Type A</strain>
    </source>
</reference>
<accession>Q0TV53</accession>
<evidence type="ECO:0000255" key="1">
    <source>
        <dbReference type="HAMAP-Rule" id="MF_00176"/>
    </source>
</evidence>
<gene>
    <name evidence="1" type="primary">serS</name>
    <name type="ordered locus">CPF_0014</name>
</gene>
<name>SYS_CLOP1</name>
<sequence>MLDLKKLRSNTEEVKKALSNRGEDFDVNVIDEVIALDEERRKILVDVEALKKQRNEVSAEIPKRKKAGEDVTEVMAEMREIGGKIKADDAKVAELNDKINYIMLRIPNIPNPAVPEGETDEDNVEIKRWGEPTKFNFEPKAHWDLGTDLDLLDFERGGKVAGSRFTVYKGMGARLERSIINYFLDKHTFENGYTEVLPPYMVNRDSMTGTGQLPKFEEDAFKVENNGYFLIPTAEVPVTNMYRNETLEGDKLPIKHAAYSACFRAEAGSAGRDTRGLIRQHQFNKVELVKFCKPEQSYEELDKLVQDAESVLQGLGLPYRIVRICKGDLGFTAALKYDIEVWMPSYNRYVEISSCSNFEDFQARRANIKYKNSPKEKPQFVHTLNGSGVAIGRTVAAILENYQQEDGSVVIPEALKEYMRCDLLK</sequence>
<protein>
    <recommendedName>
        <fullName evidence="1">Serine--tRNA ligase</fullName>
        <ecNumber evidence="1">6.1.1.11</ecNumber>
    </recommendedName>
    <alternativeName>
        <fullName evidence="1">Seryl-tRNA synthetase</fullName>
        <shortName evidence="1">SerRS</shortName>
    </alternativeName>
    <alternativeName>
        <fullName evidence="1">Seryl-tRNA(Ser/Sec) synthetase</fullName>
    </alternativeName>
</protein>
<proteinExistence type="inferred from homology"/>
<feature type="chain" id="PRO_1000019660" description="Serine--tRNA ligase">
    <location>
        <begin position="1"/>
        <end position="425"/>
    </location>
</feature>
<feature type="binding site" evidence="1">
    <location>
        <begin position="233"/>
        <end position="235"/>
    </location>
    <ligand>
        <name>L-serine</name>
        <dbReference type="ChEBI" id="CHEBI:33384"/>
    </ligand>
</feature>
<feature type="binding site" evidence="1">
    <location>
        <begin position="264"/>
        <end position="266"/>
    </location>
    <ligand>
        <name>ATP</name>
        <dbReference type="ChEBI" id="CHEBI:30616"/>
    </ligand>
</feature>
<feature type="binding site" evidence="1">
    <location>
        <position position="287"/>
    </location>
    <ligand>
        <name>L-serine</name>
        <dbReference type="ChEBI" id="CHEBI:33384"/>
    </ligand>
</feature>
<feature type="binding site" evidence="1">
    <location>
        <begin position="351"/>
        <end position="354"/>
    </location>
    <ligand>
        <name>ATP</name>
        <dbReference type="ChEBI" id="CHEBI:30616"/>
    </ligand>
</feature>
<feature type="binding site" evidence="1">
    <location>
        <position position="387"/>
    </location>
    <ligand>
        <name>L-serine</name>
        <dbReference type="ChEBI" id="CHEBI:33384"/>
    </ligand>
</feature>
<keyword id="KW-0030">Aminoacyl-tRNA synthetase</keyword>
<keyword id="KW-0067">ATP-binding</keyword>
<keyword id="KW-0963">Cytoplasm</keyword>
<keyword id="KW-0436">Ligase</keyword>
<keyword id="KW-0547">Nucleotide-binding</keyword>
<keyword id="KW-0648">Protein biosynthesis</keyword>
<comment type="function">
    <text evidence="1">Catalyzes the attachment of serine to tRNA(Ser). Is also able to aminoacylate tRNA(Sec) with serine, to form the misacylated tRNA L-seryl-tRNA(Sec), which will be further converted into selenocysteinyl-tRNA(Sec).</text>
</comment>
<comment type="catalytic activity">
    <reaction evidence="1">
        <text>tRNA(Ser) + L-serine + ATP = L-seryl-tRNA(Ser) + AMP + diphosphate + H(+)</text>
        <dbReference type="Rhea" id="RHEA:12292"/>
        <dbReference type="Rhea" id="RHEA-COMP:9669"/>
        <dbReference type="Rhea" id="RHEA-COMP:9703"/>
        <dbReference type="ChEBI" id="CHEBI:15378"/>
        <dbReference type="ChEBI" id="CHEBI:30616"/>
        <dbReference type="ChEBI" id="CHEBI:33019"/>
        <dbReference type="ChEBI" id="CHEBI:33384"/>
        <dbReference type="ChEBI" id="CHEBI:78442"/>
        <dbReference type="ChEBI" id="CHEBI:78533"/>
        <dbReference type="ChEBI" id="CHEBI:456215"/>
        <dbReference type="EC" id="6.1.1.11"/>
    </reaction>
</comment>
<comment type="catalytic activity">
    <reaction evidence="1">
        <text>tRNA(Sec) + L-serine + ATP = L-seryl-tRNA(Sec) + AMP + diphosphate + H(+)</text>
        <dbReference type="Rhea" id="RHEA:42580"/>
        <dbReference type="Rhea" id="RHEA-COMP:9742"/>
        <dbReference type="Rhea" id="RHEA-COMP:10128"/>
        <dbReference type="ChEBI" id="CHEBI:15378"/>
        <dbReference type="ChEBI" id="CHEBI:30616"/>
        <dbReference type="ChEBI" id="CHEBI:33019"/>
        <dbReference type="ChEBI" id="CHEBI:33384"/>
        <dbReference type="ChEBI" id="CHEBI:78442"/>
        <dbReference type="ChEBI" id="CHEBI:78533"/>
        <dbReference type="ChEBI" id="CHEBI:456215"/>
        <dbReference type="EC" id="6.1.1.11"/>
    </reaction>
</comment>
<comment type="pathway">
    <text evidence="1">Aminoacyl-tRNA biosynthesis; selenocysteinyl-tRNA(Sec) biosynthesis; L-seryl-tRNA(Sec) from L-serine and tRNA(Sec): step 1/1.</text>
</comment>
<comment type="subunit">
    <text evidence="1">Homodimer. The tRNA molecule binds across the dimer.</text>
</comment>
<comment type="subcellular location">
    <subcellularLocation>
        <location evidence="1">Cytoplasm</location>
    </subcellularLocation>
</comment>
<comment type="domain">
    <text evidence="1">Consists of two distinct domains, a catalytic core and a N-terminal extension that is involved in tRNA binding.</text>
</comment>
<comment type="similarity">
    <text evidence="1">Belongs to the class-II aminoacyl-tRNA synthetase family. Type-1 seryl-tRNA synthetase subfamily.</text>
</comment>
<organism>
    <name type="scientific">Clostridium perfringens (strain ATCC 13124 / DSM 756 / JCM 1290 / NCIMB 6125 / NCTC 8237 / Type A)</name>
    <dbReference type="NCBI Taxonomy" id="195103"/>
    <lineage>
        <taxon>Bacteria</taxon>
        <taxon>Bacillati</taxon>
        <taxon>Bacillota</taxon>
        <taxon>Clostridia</taxon>
        <taxon>Eubacteriales</taxon>
        <taxon>Clostridiaceae</taxon>
        <taxon>Clostridium</taxon>
    </lineage>
</organism>